<gene>
    <name evidence="1" type="primary">ribB</name>
    <name type="ordered locus">Dred_0778</name>
</gene>
<proteinExistence type="inferred from homology"/>
<accession>A4J2L3</accession>
<name>RIBB_DESRM</name>
<sequence>MNQSLLTQFGDPFERVERALRSLRNGNGVLVTDDENRENEGDLIFPAQTLNEVQMAMLIRECSGIVCLCLTDEKVRSLGLPMMVENNSSRFKTAFTVTIEAAHGVTTGVSAADRVKTVKTAVAENAKPEDLNRPGHVFPLRACPGGVLERQGHTEATVDLMKLAGLQPYGVLCELTNIDGTMARLPEVVTFANKNNIPVVTIDDLIMYRKQHQKKVS</sequence>
<keyword id="KW-0456">Lyase</keyword>
<keyword id="KW-0460">Magnesium</keyword>
<keyword id="KW-0464">Manganese</keyword>
<keyword id="KW-0479">Metal-binding</keyword>
<keyword id="KW-1185">Reference proteome</keyword>
<keyword id="KW-0686">Riboflavin biosynthesis</keyword>
<dbReference type="EC" id="4.1.99.12" evidence="1"/>
<dbReference type="EMBL" id="CP000612">
    <property type="protein sequence ID" value="ABO49316.1"/>
    <property type="molecule type" value="Genomic_DNA"/>
</dbReference>
<dbReference type="RefSeq" id="WP_011877151.1">
    <property type="nucleotide sequence ID" value="NC_009253.1"/>
</dbReference>
<dbReference type="SMR" id="A4J2L3"/>
<dbReference type="STRING" id="349161.Dred_0778"/>
<dbReference type="KEGG" id="drm:Dred_0778"/>
<dbReference type="eggNOG" id="COG0108">
    <property type="taxonomic scope" value="Bacteria"/>
</dbReference>
<dbReference type="HOGENOM" id="CLU_020273_3_0_9"/>
<dbReference type="OrthoDB" id="9793111at2"/>
<dbReference type="UniPathway" id="UPA00275">
    <property type="reaction ID" value="UER00399"/>
</dbReference>
<dbReference type="Proteomes" id="UP000001556">
    <property type="component" value="Chromosome"/>
</dbReference>
<dbReference type="GO" id="GO:0005829">
    <property type="term" value="C:cytosol"/>
    <property type="evidence" value="ECO:0007669"/>
    <property type="project" value="TreeGrafter"/>
</dbReference>
<dbReference type="GO" id="GO:0008686">
    <property type="term" value="F:3,4-dihydroxy-2-butanone-4-phosphate synthase activity"/>
    <property type="evidence" value="ECO:0007669"/>
    <property type="project" value="UniProtKB-UniRule"/>
</dbReference>
<dbReference type="GO" id="GO:0000287">
    <property type="term" value="F:magnesium ion binding"/>
    <property type="evidence" value="ECO:0007669"/>
    <property type="project" value="UniProtKB-UniRule"/>
</dbReference>
<dbReference type="GO" id="GO:0030145">
    <property type="term" value="F:manganese ion binding"/>
    <property type="evidence" value="ECO:0007669"/>
    <property type="project" value="UniProtKB-UniRule"/>
</dbReference>
<dbReference type="GO" id="GO:0009231">
    <property type="term" value="P:riboflavin biosynthetic process"/>
    <property type="evidence" value="ECO:0007669"/>
    <property type="project" value="UniProtKB-UniRule"/>
</dbReference>
<dbReference type="FunFam" id="3.90.870.10:FF:000002">
    <property type="entry name" value="3,4-dihydroxy-2-butanone 4-phosphate synthase"/>
    <property type="match status" value="1"/>
</dbReference>
<dbReference type="Gene3D" id="3.90.870.10">
    <property type="entry name" value="DHBP synthase"/>
    <property type="match status" value="1"/>
</dbReference>
<dbReference type="HAMAP" id="MF_00180">
    <property type="entry name" value="RibB"/>
    <property type="match status" value="1"/>
</dbReference>
<dbReference type="InterPro" id="IPR017945">
    <property type="entry name" value="DHBP_synth_RibB-like_a/b_dom"/>
</dbReference>
<dbReference type="InterPro" id="IPR000422">
    <property type="entry name" value="DHBP_synthase_RibB"/>
</dbReference>
<dbReference type="NCBIfam" id="TIGR00506">
    <property type="entry name" value="ribB"/>
    <property type="match status" value="1"/>
</dbReference>
<dbReference type="PANTHER" id="PTHR21327:SF38">
    <property type="entry name" value="3,4-DIHYDROXY-2-BUTANONE 4-PHOSPHATE SYNTHASE"/>
    <property type="match status" value="1"/>
</dbReference>
<dbReference type="PANTHER" id="PTHR21327">
    <property type="entry name" value="GTP CYCLOHYDROLASE II-RELATED"/>
    <property type="match status" value="1"/>
</dbReference>
<dbReference type="Pfam" id="PF00926">
    <property type="entry name" value="DHBP_synthase"/>
    <property type="match status" value="1"/>
</dbReference>
<dbReference type="SUPFAM" id="SSF55821">
    <property type="entry name" value="YrdC/RibB"/>
    <property type="match status" value="1"/>
</dbReference>
<organism>
    <name type="scientific">Desulforamulus reducens (strain ATCC BAA-1160 / DSM 100696 / MI-1)</name>
    <name type="common">Desulfotomaculum reducens</name>
    <dbReference type="NCBI Taxonomy" id="349161"/>
    <lineage>
        <taxon>Bacteria</taxon>
        <taxon>Bacillati</taxon>
        <taxon>Bacillota</taxon>
        <taxon>Clostridia</taxon>
        <taxon>Eubacteriales</taxon>
        <taxon>Peptococcaceae</taxon>
        <taxon>Desulforamulus</taxon>
    </lineage>
</organism>
<feature type="chain" id="PRO_1000071650" description="3,4-dihydroxy-2-butanone 4-phosphate synthase">
    <location>
        <begin position="1"/>
        <end position="217"/>
    </location>
</feature>
<feature type="binding site" evidence="1">
    <location>
        <begin position="37"/>
        <end position="38"/>
    </location>
    <ligand>
        <name>D-ribulose 5-phosphate</name>
        <dbReference type="ChEBI" id="CHEBI:58121"/>
    </ligand>
</feature>
<feature type="binding site" evidence="1">
    <location>
        <position position="38"/>
    </location>
    <ligand>
        <name>Mg(2+)</name>
        <dbReference type="ChEBI" id="CHEBI:18420"/>
        <label>1</label>
    </ligand>
</feature>
<feature type="binding site" evidence="1">
    <location>
        <position position="38"/>
    </location>
    <ligand>
        <name>Mg(2+)</name>
        <dbReference type="ChEBI" id="CHEBI:18420"/>
        <label>2</label>
    </ligand>
</feature>
<feature type="binding site" evidence="1">
    <location>
        <position position="42"/>
    </location>
    <ligand>
        <name>D-ribulose 5-phosphate</name>
        <dbReference type="ChEBI" id="CHEBI:58121"/>
    </ligand>
</feature>
<feature type="binding site" evidence="1">
    <location>
        <begin position="150"/>
        <end position="154"/>
    </location>
    <ligand>
        <name>D-ribulose 5-phosphate</name>
        <dbReference type="ChEBI" id="CHEBI:58121"/>
    </ligand>
</feature>
<feature type="binding site" evidence="1">
    <location>
        <position position="153"/>
    </location>
    <ligand>
        <name>Mg(2+)</name>
        <dbReference type="ChEBI" id="CHEBI:18420"/>
        <label>2</label>
    </ligand>
</feature>
<feature type="binding site" evidence="1">
    <location>
        <position position="174"/>
    </location>
    <ligand>
        <name>D-ribulose 5-phosphate</name>
        <dbReference type="ChEBI" id="CHEBI:58121"/>
    </ligand>
</feature>
<feature type="site" description="Essential for catalytic activity" evidence="1">
    <location>
        <position position="136"/>
    </location>
</feature>
<feature type="site" description="Essential for catalytic activity" evidence="1">
    <location>
        <position position="174"/>
    </location>
</feature>
<reference key="1">
    <citation type="submission" date="2007-03" db="EMBL/GenBank/DDBJ databases">
        <title>Complete sequence of Desulfotomaculum reducens MI-1.</title>
        <authorList>
            <consortium name="US DOE Joint Genome Institute"/>
            <person name="Copeland A."/>
            <person name="Lucas S."/>
            <person name="Lapidus A."/>
            <person name="Barry K."/>
            <person name="Detter J.C."/>
            <person name="Glavina del Rio T."/>
            <person name="Hammon N."/>
            <person name="Israni S."/>
            <person name="Dalin E."/>
            <person name="Tice H."/>
            <person name="Pitluck S."/>
            <person name="Sims D."/>
            <person name="Brettin T."/>
            <person name="Bruce D."/>
            <person name="Han C."/>
            <person name="Tapia R."/>
            <person name="Schmutz J."/>
            <person name="Larimer F."/>
            <person name="Land M."/>
            <person name="Hauser L."/>
            <person name="Kyrpides N."/>
            <person name="Kim E."/>
            <person name="Tebo B.M."/>
            <person name="Richardson P."/>
        </authorList>
    </citation>
    <scope>NUCLEOTIDE SEQUENCE [LARGE SCALE GENOMIC DNA]</scope>
    <source>
        <strain>ATCC BAA-1160 / DSM 100696 / MI-1</strain>
    </source>
</reference>
<protein>
    <recommendedName>
        <fullName evidence="1">3,4-dihydroxy-2-butanone 4-phosphate synthase</fullName>
        <shortName evidence="1">DHBP synthase</shortName>
        <ecNumber evidence="1">4.1.99.12</ecNumber>
    </recommendedName>
</protein>
<comment type="function">
    <text evidence="1">Catalyzes the conversion of D-ribulose 5-phosphate to formate and 3,4-dihydroxy-2-butanone 4-phosphate.</text>
</comment>
<comment type="catalytic activity">
    <reaction evidence="1">
        <text>D-ribulose 5-phosphate = (2S)-2-hydroxy-3-oxobutyl phosphate + formate + H(+)</text>
        <dbReference type="Rhea" id="RHEA:18457"/>
        <dbReference type="ChEBI" id="CHEBI:15378"/>
        <dbReference type="ChEBI" id="CHEBI:15740"/>
        <dbReference type="ChEBI" id="CHEBI:58121"/>
        <dbReference type="ChEBI" id="CHEBI:58830"/>
        <dbReference type="EC" id="4.1.99.12"/>
    </reaction>
</comment>
<comment type="cofactor">
    <cofactor evidence="1">
        <name>Mg(2+)</name>
        <dbReference type="ChEBI" id="CHEBI:18420"/>
    </cofactor>
    <cofactor evidence="1">
        <name>Mn(2+)</name>
        <dbReference type="ChEBI" id="CHEBI:29035"/>
    </cofactor>
    <text evidence="1">Binds 2 divalent metal cations per subunit. Magnesium or manganese.</text>
</comment>
<comment type="pathway">
    <text evidence="1">Cofactor biosynthesis; riboflavin biosynthesis; 2-hydroxy-3-oxobutyl phosphate from D-ribulose 5-phosphate: step 1/1.</text>
</comment>
<comment type="subunit">
    <text evidence="1">Homodimer.</text>
</comment>
<comment type="similarity">
    <text evidence="1">Belongs to the DHBP synthase family.</text>
</comment>
<evidence type="ECO:0000255" key="1">
    <source>
        <dbReference type="HAMAP-Rule" id="MF_00180"/>
    </source>
</evidence>